<gene>
    <name evidence="1" type="primary">hemF</name>
    <name type="ordered locus">PSPA7_0025</name>
</gene>
<accession>A6UX86</accession>
<proteinExistence type="inferred from homology"/>
<comment type="function">
    <text evidence="1">Involved in the heme biosynthesis. Catalyzes the aerobic oxidative decarboxylation of propionate groups of rings A and B of coproporphyrinogen-III to yield the vinyl groups in protoporphyrinogen-IX.</text>
</comment>
<comment type="catalytic activity">
    <reaction evidence="1">
        <text>coproporphyrinogen III + O2 + 2 H(+) = protoporphyrinogen IX + 2 CO2 + 2 H2O</text>
        <dbReference type="Rhea" id="RHEA:18257"/>
        <dbReference type="ChEBI" id="CHEBI:15377"/>
        <dbReference type="ChEBI" id="CHEBI:15378"/>
        <dbReference type="ChEBI" id="CHEBI:15379"/>
        <dbReference type="ChEBI" id="CHEBI:16526"/>
        <dbReference type="ChEBI" id="CHEBI:57307"/>
        <dbReference type="ChEBI" id="CHEBI:57309"/>
        <dbReference type="EC" id="1.3.3.3"/>
    </reaction>
</comment>
<comment type="cofactor">
    <cofactor evidence="1">
        <name>a divalent metal cation</name>
        <dbReference type="ChEBI" id="CHEBI:60240"/>
    </cofactor>
</comment>
<comment type="pathway">
    <text evidence="1">Porphyrin-containing compound metabolism; protoporphyrin-IX biosynthesis; protoporphyrinogen-IX from coproporphyrinogen-III (O2 route): step 1/1.</text>
</comment>
<comment type="subunit">
    <text evidence="1">Homodimer.</text>
</comment>
<comment type="subcellular location">
    <subcellularLocation>
        <location evidence="1">Cytoplasm</location>
    </subcellularLocation>
</comment>
<comment type="similarity">
    <text evidence="1">Belongs to the aerobic coproporphyrinogen-III oxidase family.</text>
</comment>
<reference key="1">
    <citation type="submission" date="2007-06" db="EMBL/GenBank/DDBJ databases">
        <authorList>
            <person name="Dodson R.J."/>
            <person name="Harkins D."/>
            <person name="Paulsen I.T."/>
        </authorList>
    </citation>
    <scope>NUCLEOTIDE SEQUENCE [LARGE SCALE GENOMIC DNA]</scope>
    <source>
        <strain>DSM 24068 / PA7</strain>
    </source>
</reference>
<feature type="chain" id="PRO_1000019483" description="Oxygen-dependent coproporphyrinogen-III oxidase">
    <location>
        <begin position="1"/>
        <end position="305"/>
    </location>
</feature>
<feature type="region of interest" description="Important for dimerization" evidence="1">
    <location>
        <begin position="241"/>
        <end position="276"/>
    </location>
</feature>
<feature type="active site" description="Proton donor" evidence="1">
    <location>
        <position position="107"/>
    </location>
</feature>
<feature type="binding site" evidence="1">
    <location>
        <position position="93"/>
    </location>
    <ligand>
        <name>substrate</name>
    </ligand>
</feature>
<feature type="binding site" evidence="1">
    <location>
        <position position="97"/>
    </location>
    <ligand>
        <name>a divalent metal cation</name>
        <dbReference type="ChEBI" id="CHEBI:60240"/>
    </ligand>
</feature>
<feature type="binding site" evidence="1">
    <location>
        <position position="107"/>
    </location>
    <ligand>
        <name>a divalent metal cation</name>
        <dbReference type="ChEBI" id="CHEBI:60240"/>
    </ligand>
</feature>
<feature type="binding site" evidence="1">
    <location>
        <begin position="109"/>
        <end position="111"/>
    </location>
    <ligand>
        <name>substrate</name>
    </ligand>
</feature>
<feature type="binding site" evidence="1">
    <location>
        <position position="146"/>
    </location>
    <ligand>
        <name>a divalent metal cation</name>
        <dbReference type="ChEBI" id="CHEBI:60240"/>
    </ligand>
</feature>
<feature type="binding site" evidence="1">
    <location>
        <position position="176"/>
    </location>
    <ligand>
        <name>a divalent metal cation</name>
        <dbReference type="ChEBI" id="CHEBI:60240"/>
    </ligand>
</feature>
<feature type="binding site" evidence="1">
    <location>
        <begin position="259"/>
        <end position="261"/>
    </location>
    <ligand>
        <name>substrate</name>
    </ligand>
</feature>
<feature type="site" description="Important for dimerization" evidence="1">
    <location>
        <position position="176"/>
    </location>
</feature>
<sequence length="305" mass="34728">MTDRIAAVKTYLLDLQDRICAALEAEDGKARFAEDAWERPAGGGGRTRVIGDGALIEKGGVNFSHVFGDSLPPSASAHRPELAGRGFQALGVSLVIHPENPHVPTSHANVRFFCAEKAGEEPVWWFGGGFDLTPYYASEEDCVHWHRVARDACAPFGADVYPRYKEWCDRYFHLKHRNEPRGIGGLFFDDLNQWDFDTCFAFIRAIGDAYIDAYLPIVQRRKHTPFDERQREFQAYRRGRYVEFNLVFDRGTLFGLQSGGRTESILMSLPPQVRWGYDWKPEPGSEEARLTEYFLTDRDWLAGQP</sequence>
<keyword id="KW-0963">Cytoplasm</keyword>
<keyword id="KW-0350">Heme biosynthesis</keyword>
<keyword id="KW-0479">Metal-binding</keyword>
<keyword id="KW-0560">Oxidoreductase</keyword>
<keyword id="KW-0627">Porphyrin biosynthesis</keyword>
<evidence type="ECO:0000255" key="1">
    <source>
        <dbReference type="HAMAP-Rule" id="MF_00333"/>
    </source>
</evidence>
<organism>
    <name type="scientific">Pseudomonas paraeruginosa (strain DSM 24068 / PA7)</name>
    <name type="common">Pseudomonas aeruginosa (strain PA7)</name>
    <dbReference type="NCBI Taxonomy" id="381754"/>
    <lineage>
        <taxon>Bacteria</taxon>
        <taxon>Pseudomonadati</taxon>
        <taxon>Pseudomonadota</taxon>
        <taxon>Gammaproteobacteria</taxon>
        <taxon>Pseudomonadales</taxon>
        <taxon>Pseudomonadaceae</taxon>
        <taxon>Pseudomonas</taxon>
        <taxon>Pseudomonas paraeruginosa</taxon>
    </lineage>
</organism>
<name>HEM6_PSEP7</name>
<protein>
    <recommendedName>
        <fullName evidence="1">Oxygen-dependent coproporphyrinogen-III oxidase</fullName>
        <shortName evidence="1">CPO</shortName>
        <shortName evidence="1">Coprogen oxidase</shortName>
        <shortName evidence="1">Coproporphyrinogenase</shortName>
        <ecNumber evidence="1">1.3.3.3</ecNumber>
    </recommendedName>
</protein>
<dbReference type="EC" id="1.3.3.3" evidence="1"/>
<dbReference type="EMBL" id="CP000744">
    <property type="protein sequence ID" value="ABR81171.1"/>
    <property type="molecule type" value="Genomic_DNA"/>
</dbReference>
<dbReference type="RefSeq" id="WP_011979055.1">
    <property type="nucleotide sequence ID" value="NC_009656.1"/>
</dbReference>
<dbReference type="SMR" id="A6UX86"/>
<dbReference type="GeneID" id="77218566"/>
<dbReference type="KEGG" id="pap:PSPA7_0025"/>
<dbReference type="HOGENOM" id="CLU_026169_0_1_6"/>
<dbReference type="UniPathway" id="UPA00251">
    <property type="reaction ID" value="UER00322"/>
</dbReference>
<dbReference type="Proteomes" id="UP000001582">
    <property type="component" value="Chromosome"/>
</dbReference>
<dbReference type="GO" id="GO:0005737">
    <property type="term" value="C:cytoplasm"/>
    <property type="evidence" value="ECO:0007669"/>
    <property type="project" value="UniProtKB-SubCell"/>
</dbReference>
<dbReference type="GO" id="GO:0004109">
    <property type="term" value="F:coproporphyrinogen oxidase activity"/>
    <property type="evidence" value="ECO:0007669"/>
    <property type="project" value="UniProtKB-UniRule"/>
</dbReference>
<dbReference type="GO" id="GO:0046872">
    <property type="term" value="F:metal ion binding"/>
    <property type="evidence" value="ECO:0007669"/>
    <property type="project" value="UniProtKB-KW"/>
</dbReference>
<dbReference type="GO" id="GO:0042803">
    <property type="term" value="F:protein homodimerization activity"/>
    <property type="evidence" value="ECO:0000250"/>
    <property type="project" value="UniProtKB"/>
</dbReference>
<dbReference type="GO" id="GO:0006782">
    <property type="term" value="P:protoporphyrinogen IX biosynthetic process"/>
    <property type="evidence" value="ECO:0007669"/>
    <property type="project" value="UniProtKB-UniRule"/>
</dbReference>
<dbReference type="FunFam" id="3.40.1500.10:FF:000001">
    <property type="entry name" value="Oxygen-dependent coproporphyrinogen-III oxidase"/>
    <property type="match status" value="1"/>
</dbReference>
<dbReference type="Gene3D" id="3.40.1500.10">
    <property type="entry name" value="Coproporphyrinogen III oxidase, aerobic"/>
    <property type="match status" value="1"/>
</dbReference>
<dbReference type="HAMAP" id="MF_00333">
    <property type="entry name" value="Coprogen_oxidas"/>
    <property type="match status" value="1"/>
</dbReference>
<dbReference type="InterPro" id="IPR001260">
    <property type="entry name" value="Coprogen_oxidase_aer"/>
</dbReference>
<dbReference type="InterPro" id="IPR036406">
    <property type="entry name" value="Coprogen_oxidase_aer_sf"/>
</dbReference>
<dbReference type="InterPro" id="IPR018375">
    <property type="entry name" value="Coprogen_oxidase_CS"/>
</dbReference>
<dbReference type="NCBIfam" id="NF003727">
    <property type="entry name" value="PRK05330.1"/>
    <property type="match status" value="1"/>
</dbReference>
<dbReference type="PANTHER" id="PTHR10755">
    <property type="entry name" value="COPROPORPHYRINOGEN III OXIDASE, MITOCHONDRIAL"/>
    <property type="match status" value="1"/>
</dbReference>
<dbReference type="PANTHER" id="PTHR10755:SF0">
    <property type="entry name" value="OXYGEN-DEPENDENT COPROPORPHYRINOGEN-III OXIDASE, MITOCHONDRIAL"/>
    <property type="match status" value="1"/>
</dbReference>
<dbReference type="Pfam" id="PF01218">
    <property type="entry name" value="Coprogen_oxidas"/>
    <property type="match status" value="1"/>
</dbReference>
<dbReference type="PIRSF" id="PIRSF000166">
    <property type="entry name" value="Coproporphyri_ox"/>
    <property type="match status" value="1"/>
</dbReference>
<dbReference type="PRINTS" id="PR00073">
    <property type="entry name" value="COPRGNOXDASE"/>
</dbReference>
<dbReference type="SUPFAM" id="SSF102886">
    <property type="entry name" value="Coproporphyrinogen III oxidase"/>
    <property type="match status" value="1"/>
</dbReference>
<dbReference type="PROSITE" id="PS01021">
    <property type="entry name" value="COPROGEN_OXIDASE"/>
    <property type="match status" value="1"/>
</dbReference>